<keyword id="KW-1185">Reference proteome</keyword>
<keyword id="KW-0687">Ribonucleoprotein</keyword>
<keyword id="KW-0689">Ribosomal protein</keyword>
<dbReference type="EMBL" id="CP000453">
    <property type="protein sequence ID" value="ABI57207.1"/>
    <property type="molecule type" value="Genomic_DNA"/>
</dbReference>
<dbReference type="RefSeq" id="WP_011629601.1">
    <property type="nucleotide sequence ID" value="NC_008340.1"/>
</dbReference>
<dbReference type="SMR" id="Q0A7I0"/>
<dbReference type="KEGG" id="aeh:Mlg_1863"/>
<dbReference type="eggNOG" id="COG0052">
    <property type="taxonomic scope" value="Bacteria"/>
</dbReference>
<dbReference type="HOGENOM" id="CLU_040318_1_2_6"/>
<dbReference type="OrthoDB" id="9808036at2"/>
<dbReference type="Proteomes" id="UP000001962">
    <property type="component" value="Chromosome"/>
</dbReference>
<dbReference type="GO" id="GO:0022627">
    <property type="term" value="C:cytosolic small ribosomal subunit"/>
    <property type="evidence" value="ECO:0007669"/>
    <property type="project" value="TreeGrafter"/>
</dbReference>
<dbReference type="GO" id="GO:0003735">
    <property type="term" value="F:structural constituent of ribosome"/>
    <property type="evidence" value="ECO:0007669"/>
    <property type="project" value="InterPro"/>
</dbReference>
<dbReference type="GO" id="GO:0006412">
    <property type="term" value="P:translation"/>
    <property type="evidence" value="ECO:0007669"/>
    <property type="project" value="UniProtKB-UniRule"/>
</dbReference>
<dbReference type="CDD" id="cd01425">
    <property type="entry name" value="RPS2"/>
    <property type="match status" value="1"/>
</dbReference>
<dbReference type="FunFam" id="1.10.287.610:FF:000001">
    <property type="entry name" value="30S ribosomal protein S2"/>
    <property type="match status" value="1"/>
</dbReference>
<dbReference type="Gene3D" id="3.40.50.10490">
    <property type="entry name" value="Glucose-6-phosphate isomerase like protein, domain 1"/>
    <property type="match status" value="1"/>
</dbReference>
<dbReference type="Gene3D" id="1.10.287.610">
    <property type="entry name" value="Helix hairpin bin"/>
    <property type="match status" value="1"/>
</dbReference>
<dbReference type="HAMAP" id="MF_00291_B">
    <property type="entry name" value="Ribosomal_uS2_B"/>
    <property type="match status" value="1"/>
</dbReference>
<dbReference type="InterPro" id="IPR001865">
    <property type="entry name" value="Ribosomal_uS2"/>
</dbReference>
<dbReference type="InterPro" id="IPR005706">
    <property type="entry name" value="Ribosomal_uS2_bac/mit/plastid"/>
</dbReference>
<dbReference type="InterPro" id="IPR018130">
    <property type="entry name" value="Ribosomal_uS2_CS"/>
</dbReference>
<dbReference type="InterPro" id="IPR023591">
    <property type="entry name" value="Ribosomal_uS2_flav_dom_sf"/>
</dbReference>
<dbReference type="NCBIfam" id="TIGR01011">
    <property type="entry name" value="rpsB_bact"/>
    <property type="match status" value="1"/>
</dbReference>
<dbReference type="PANTHER" id="PTHR12534">
    <property type="entry name" value="30S RIBOSOMAL PROTEIN S2 PROKARYOTIC AND ORGANELLAR"/>
    <property type="match status" value="1"/>
</dbReference>
<dbReference type="PANTHER" id="PTHR12534:SF0">
    <property type="entry name" value="SMALL RIBOSOMAL SUBUNIT PROTEIN US2M"/>
    <property type="match status" value="1"/>
</dbReference>
<dbReference type="Pfam" id="PF00318">
    <property type="entry name" value="Ribosomal_S2"/>
    <property type="match status" value="1"/>
</dbReference>
<dbReference type="PRINTS" id="PR00395">
    <property type="entry name" value="RIBOSOMALS2"/>
</dbReference>
<dbReference type="SUPFAM" id="SSF52313">
    <property type="entry name" value="Ribosomal protein S2"/>
    <property type="match status" value="1"/>
</dbReference>
<dbReference type="PROSITE" id="PS00962">
    <property type="entry name" value="RIBOSOMAL_S2_1"/>
    <property type="match status" value="1"/>
</dbReference>
<dbReference type="PROSITE" id="PS00963">
    <property type="entry name" value="RIBOSOMAL_S2_2"/>
    <property type="match status" value="1"/>
</dbReference>
<name>RS2_ALKEH</name>
<sequence>MANVSMRDMLEAGVHFGHQTRYWNPKMAPYIFGQRNKIHIINLEKTLPLYQEAMNYVGRLAAEGGKVLFVGTKRSARKAVREEASRCGMPYVDHRWLGGMLTNFRTVKGSIRRLKDLEAQAEDGTFDKLTKREALSLSREMEKLNRTLSGIKDMNGLPDAMFVIDVGFEHIAVQEARKLGIPVVAVVDTNNSPREVDYVIPGNDDAIRAIQLYLSGAADAVLEAKTATARPGGDDDFVEVDEATEQQG</sequence>
<reference key="1">
    <citation type="submission" date="2006-08" db="EMBL/GenBank/DDBJ databases">
        <title>Complete sequence of Alkalilimnicola ehrilichei MLHE-1.</title>
        <authorList>
            <person name="Copeland A."/>
            <person name="Lucas S."/>
            <person name="Lapidus A."/>
            <person name="Barry K."/>
            <person name="Detter J.C."/>
            <person name="Glavina del Rio T."/>
            <person name="Hammon N."/>
            <person name="Israni S."/>
            <person name="Dalin E."/>
            <person name="Tice H."/>
            <person name="Pitluck S."/>
            <person name="Sims D."/>
            <person name="Brettin T."/>
            <person name="Bruce D."/>
            <person name="Han C."/>
            <person name="Tapia R."/>
            <person name="Gilna P."/>
            <person name="Schmutz J."/>
            <person name="Larimer F."/>
            <person name="Land M."/>
            <person name="Hauser L."/>
            <person name="Kyrpides N."/>
            <person name="Mikhailova N."/>
            <person name="Oremland R.S."/>
            <person name="Hoeft S.E."/>
            <person name="Switzer-Blum J."/>
            <person name="Kulp T."/>
            <person name="King G."/>
            <person name="Tabita R."/>
            <person name="Witte B."/>
            <person name="Santini J.M."/>
            <person name="Basu P."/>
            <person name="Hollibaugh J.T."/>
            <person name="Xie G."/>
            <person name="Stolz J.F."/>
            <person name="Richardson P."/>
        </authorList>
    </citation>
    <scope>NUCLEOTIDE SEQUENCE [LARGE SCALE GENOMIC DNA]</scope>
    <source>
        <strain>ATCC BAA-1101 / DSM 17681 / MLHE-1</strain>
    </source>
</reference>
<accession>Q0A7I0</accession>
<comment type="similarity">
    <text evidence="1">Belongs to the universal ribosomal protein uS2 family.</text>
</comment>
<protein>
    <recommendedName>
        <fullName evidence="1">Small ribosomal subunit protein uS2</fullName>
    </recommendedName>
    <alternativeName>
        <fullName evidence="2">30S ribosomal protein S2</fullName>
    </alternativeName>
</protein>
<feature type="chain" id="PRO_1000003884" description="Small ribosomal subunit protein uS2">
    <location>
        <begin position="1"/>
        <end position="248"/>
    </location>
</feature>
<evidence type="ECO:0000255" key="1">
    <source>
        <dbReference type="HAMAP-Rule" id="MF_00291"/>
    </source>
</evidence>
<evidence type="ECO:0000305" key="2"/>
<proteinExistence type="inferred from homology"/>
<organism>
    <name type="scientific">Alkalilimnicola ehrlichii (strain ATCC BAA-1101 / DSM 17681 / MLHE-1)</name>
    <dbReference type="NCBI Taxonomy" id="187272"/>
    <lineage>
        <taxon>Bacteria</taxon>
        <taxon>Pseudomonadati</taxon>
        <taxon>Pseudomonadota</taxon>
        <taxon>Gammaproteobacteria</taxon>
        <taxon>Chromatiales</taxon>
        <taxon>Ectothiorhodospiraceae</taxon>
        <taxon>Alkalilimnicola</taxon>
    </lineage>
</organism>
<gene>
    <name evidence="1" type="primary">rpsB</name>
    <name type="ordered locus">Mlg_1863</name>
</gene>